<reference key="1">
    <citation type="submission" date="2007-10" db="EMBL/GenBank/DDBJ databases">
        <title>Complete sequence of chromosome of Desulforudis audaxviator MP104C.</title>
        <authorList>
            <person name="Copeland A."/>
            <person name="Lucas S."/>
            <person name="Lapidus A."/>
            <person name="Barry K."/>
            <person name="Glavina del Rio T."/>
            <person name="Dalin E."/>
            <person name="Tice H."/>
            <person name="Bruce D."/>
            <person name="Pitluck S."/>
            <person name="Lowry S.R."/>
            <person name="Larimer F."/>
            <person name="Land M.L."/>
            <person name="Hauser L."/>
            <person name="Kyrpides N."/>
            <person name="Ivanova N.N."/>
            <person name="Richardson P."/>
        </authorList>
    </citation>
    <scope>NUCLEOTIDE SEQUENCE [LARGE SCALE GENOMIC DNA]</scope>
    <source>
        <strain>MP104C</strain>
    </source>
</reference>
<evidence type="ECO:0000255" key="1">
    <source>
        <dbReference type="HAMAP-Rule" id="MF_00145"/>
    </source>
</evidence>
<comment type="catalytic activity">
    <reaction evidence="1">
        <text>(2R)-3-phosphoglycerate + ATP = (2R)-3-phospho-glyceroyl phosphate + ADP</text>
        <dbReference type="Rhea" id="RHEA:14801"/>
        <dbReference type="ChEBI" id="CHEBI:30616"/>
        <dbReference type="ChEBI" id="CHEBI:57604"/>
        <dbReference type="ChEBI" id="CHEBI:58272"/>
        <dbReference type="ChEBI" id="CHEBI:456216"/>
        <dbReference type="EC" id="2.7.2.3"/>
    </reaction>
</comment>
<comment type="pathway">
    <text evidence="1">Carbohydrate degradation; glycolysis; pyruvate from D-glyceraldehyde 3-phosphate: step 2/5.</text>
</comment>
<comment type="subunit">
    <text evidence="1">Monomer.</text>
</comment>
<comment type="subcellular location">
    <subcellularLocation>
        <location evidence="1">Cytoplasm</location>
    </subcellularLocation>
</comment>
<comment type="similarity">
    <text evidence="1">Belongs to the phosphoglycerate kinase family.</text>
</comment>
<proteinExistence type="inferred from homology"/>
<name>PGK_DESAP</name>
<protein>
    <recommendedName>
        <fullName evidence="1">Phosphoglycerate kinase</fullName>
        <ecNumber evidence="1">2.7.2.3</ecNumber>
    </recommendedName>
</protein>
<dbReference type="EC" id="2.7.2.3" evidence="1"/>
<dbReference type="EMBL" id="CP000860">
    <property type="protein sequence ID" value="ACA58864.1"/>
    <property type="molecule type" value="Genomic_DNA"/>
</dbReference>
<dbReference type="RefSeq" id="WP_012301456.1">
    <property type="nucleotide sequence ID" value="NC_010424.1"/>
</dbReference>
<dbReference type="SMR" id="B1I0X7"/>
<dbReference type="STRING" id="477974.Daud_0303"/>
<dbReference type="KEGG" id="dau:Daud_0303"/>
<dbReference type="eggNOG" id="COG0126">
    <property type="taxonomic scope" value="Bacteria"/>
</dbReference>
<dbReference type="HOGENOM" id="CLU_025427_0_2_9"/>
<dbReference type="OrthoDB" id="9808460at2"/>
<dbReference type="UniPathway" id="UPA00109">
    <property type="reaction ID" value="UER00185"/>
</dbReference>
<dbReference type="Proteomes" id="UP000008544">
    <property type="component" value="Chromosome"/>
</dbReference>
<dbReference type="GO" id="GO:0005829">
    <property type="term" value="C:cytosol"/>
    <property type="evidence" value="ECO:0007669"/>
    <property type="project" value="TreeGrafter"/>
</dbReference>
<dbReference type="GO" id="GO:0043531">
    <property type="term" value="F:ADP binding"/>
    <property type="evidence" value="ECO:0007669"/>
    <property type="project" value="TreeGrafter"/>
</dbReference>
<dbReference type="GO" id="GO:0005524">
    <property type="term" value="F:ATP binding"/>
    <property type="evidence" value="ECO:0007669"/>
    <property type="project" value="UniProtKB-KW"/>
</dbReference>
<dbReference type="GO" id="GO:0004618">
    <property type="term" value="F:phosphoglycerate kinase activity"/>
    <property type="evidence" value="ECO:0007669"/>
    <property type="project" value="UniProtKB-UniRule"/>
</dbReference>
<dbReference type="GO" id="GO:0006094">
    <property type="term" value="P:gluconeogenesis"/>
    <property type="evidence" value="ECO:0007669"/>
    <property type="project" value="TreeGrafter"/>
</dbReference>
<dbReference type="GO" id="GO:0006096">
    <property type="term" value="P:glycolytic process"/>
    <property type="evidence" value="ECO:0007669"/>
    <property type="project" value="UniProtKB-UniRule"/>
</dbReference>
<dbReference type="CDD" id="cd00318">
    <property type="entry name" value="Phosphoglycerate_kinase"/>
    <property type="match status" value="1"/>
</dbReference>
<dbReference type="FunFam" id="3.40.50.1260:FF:000006">
    <property type="entry name" value="Phosphoglycerate kinase"/>
    <property type="match status" value="1"/>
</dbReference>
<dbReference type="FunFam" id="3.40.50.1260:FF:000031">
    <property type="entry name" value="Phosphoglycerate kinase 1"/>
    <property type="match status" value="1"/>
</dbReference>
<dbReference type="Gene3D" id="3.40.50.1260">
    <property type="entry name" value="Phosphoglycerate kinase, N-terminal domain"/>
    <property type="match status" value="2"/>
</dbReference>
<dbReference type="HAMAP" id="MF_00145">
    <property type="entry name" value="Phosphoglyc_kinase"/>
    <property type="match status" value="1"/>
</dbReference>
<dbReference type="InterPro" id="IPR001576">
    <property type="entry name" value="Phosphoglycerate_kinase"/>
</dbReference>
<dbReference type="InterPro" id="IPR015911">
    <property type="entry name" value="Phosphoglycerate_kinase_CS"/>
</dbReference>
<dbReference type="InterPro" id="IPR015824">
    <property type="entry name" value="Phosphoglycerate_kinase_N"/>
</dbReference>
<dbReference type="InterPro" id="IPR036043">
    <property type="entry name" value="Phosphoglycerate_kinase_sf"/>
</dbReference>
<dbReference type="PANTHER" id="PTHR11406">
    <property type="entry name" value="PHOSPHOGLYCERATE KINASE"/>
    <property type="match status" value="1"/>
</dbReference>
<dbReference type="PANTHER" id="PTHR11406:SF23">
    <property type="entry name" value="PHOSPHOGLYCERATE KINASE 1, CHLOROPLASTIC-RELATED"/>
    <property type="match status" value="1"/>
</dbReference>
<dbReference type="Pfam" id="PF00162">
    <property type="entry name" value="PGK"/>
    <property type="match status" value="1"/>
</dbReference>
<dbReference type="PIRSF" id="PIRSF000724">
    <property type="entry name" value="Pgk"/>
    <property type="match status" value="1"/>
</dbReference>
<dbReference type="PRINTS" id="PR00477">
    <property type="entry name" value="PHGLYCKINASE"/>
</dbReference>
<dbReference type="SUPFAM" id="SSF53748">
    <property type="entry name" value="Phosphoglycerate kinase"/>
    <property type="match status" value="1"/>
</dbReference>
<dbReference type="PROSITE" id="PS00111">
    <property type="entry name" value="PGLYCERATE_KINASE"/>
    <property type="match status" value="1"/>
</dbReference>
<feature type="chain" id="PRO_1000096337" description="Phosphoglycerate kinase">
    <location>
        <begin position="1"/>
        <end position="393"/>
    </location>
</feature>
<feature type="binding site" evidence="1">
    <location>
        <begin position="21"/>
        <end position="23"/>
    </location>
    <ligand>
        <name>substrate</name>
    </ligand>
</feature>
<feature type="binding site" evidence="1">
    <location>
        <position position="37"/>
    </location>
    <ligand>
        <name>substrate</name>
    </ligand>
</feature>
<feature type="binding site" evidence="1">
    <location>
        <begin position="60"/>
        <end position="63"/>
    </location>
    <ligand>
        <name>substrate</name>
    </ligand>
</feature>
<feature type="binding site" evidence="1">
    <location>
        <position position="119"/>
    </location>
    <ligand>
        <name>substrate</name>
    </ligand>
</feature>
<feature type="binding site" evidence="1">
    <location>
        <position position="152"/>
    </location>
    <ligand>
        <name>substrate</name>
    </ligand>
</feature>
<feature type="binding site" evidence="1">
    <location>
        <position position="202"/>
    </location>
    <ligand>
        <name>ATP</name>
        <dbReference type="ChEBI" id="CHEBI:30616"/>
    </ligand>
</feature>
<feature type="binding site" evidence="1">
    <location>
        <position position="323"/>
    </location>
    <ligand>
        <name>ATP</name>
        <dbReference type="ChEBI" id="CHEBI:30616"/>
    </ligand>
</feature>
<feature type="binding site" evidence="1">
    <location>
        <begin position="349"/>
        <end position="352"/>
    </location>
    <ligand>
        <name>ATP</name>
        <dbReference type="ChEBI" id="CHEBI:30616"/>
    </ligand>
</feature>
<gene>
    <name evidence="1" type="primary">pgk</name>
    <name type="ordered locus">Daud_0303</name>
</gene>
<keyword id="KW-0067">ATP-binding</keyword>
<keyword id="KW-0963">Cytoplasm</keyword>
<keyword id="KW-0324">Glycolysis</keyword>
<keyword id="KW-0418">Kinase</keyword>
<keyword id="KW-0547">Nucleotide-binding</keyword>
<keyword id="KW-1185">Reference proteome</keyword>
<keyword id="KW-0808">Transferase</keyword>
<accession>B1I0X7</accession>
<organism>
    <name type="scientific">Desulforudis audaxviator (strain MP104C)</name>
    <dbReference type="NCBI Taxonomy" id="477974"/>
    <lineage>
        <taxon>Bacteria</taxon>
        <taxon>Bacillati</taxon>
        <taxon>Bacillota</taxon>
        <taxon>Clostridia</taxon>
        <taxon>Thermoanaerobacterales</taxon>
        <taxon>Candidatus Desulforudaceae</taxon>
        <taxon>Candidatus Desulforudis</taxon>
    </lineage>
</organism>
<sequence>MLKKTIRDVDIAGKRVFVRVDFNVPFNERGEVADDTRIRAVLPTIEYLLTGGAAVILASHLGRPKGKRDDRFSLRPVADRLSALTARQVRFAAEAVGPETEAASRELAPGDILLLENIRFYPEEEQNDPEFASRLAALADLYVNDAFGTAHRAHASTAGIAAHLPAVAGLLLERELDILGRLLSVPERPFVALIGGAKISDKIGVLERLIEKADYLLVGGGMANTFLAAQGHNLQASLVEADRLETARYLLAKAGPGERITLPIDLVVAPDREQPEKRATVAVESIPAGWAAFDLGSGTVRLYANRLRPARTIFWNGPVGLFEVPGFDRGTLDLARVIAAAEATTVVGGGDTVAAVKQAGVLDQVTHVSTGGGASLKLLEGRELPGVAVLQNR</sequence>